<reference key="1">
    <citation type="submission" date="2006-11" db="EMBL/GenBank/DDBJ databases">
        <title>Sequence of Campylobacter fetus subsp. fetus 82-40.</title>
        <authorList>
            <person name="Fouts D.E."/>
            <person name="Nelson K.E."/>
        </authorList>
    </citation>
    <scope>NUCLEOTIDE SEQUENCE [LARGE SCALE GENOMIC DNA]</scope>
    <source>
        <strain>82-40</strain>
    </source>
</reference>
<protein>
    <recommendedName>
        <fullName evidence="1">Fluoride-specific ion channel FluC</fullName>
    </recommendedName>
</protein>
<keyword id="KW-0997">Cell inner membrane</keyword>
<keyword id="KW-1003">Cell membrane</keyword>
<keyword id="KW-0407">Ion channel</keyword>
<keyword id="KW-0406">Ion transport</keyword>
<keyword id="KW-0472">Membrane</keyword>
<keyword id="KW-0479">Metal-binding</keyword>
<keyword id="KW-0915">Sodium</keyword>
<keyword id="KW-0812">Transmembrane</keyword>
<keyword id="KW-1133">Transmembrane helix</keyword>
<keyword id="KW-0813">Transport</keyword>
<comment type="function">
    <text evidence="1">Fluoride-specific ion channel. Important for reducing fluoride concentration in the cell, thus reducing its toxicity.</text>
</comment>
<comment type="catalytic activity">
    <reaction evidence="1">
        <text>fluoride(in) = fluoride(out)</text>
        <dbReference type="Rhea" id="RHEA:76159"/>
        <dbReference type="ChEBI" id="CHEBI:17051"/>
    </reaction>
    <physiologicalReaction direction="left-to-right" evidence="1">
        <dbReference type="Rhea" id="RHEA:76160"/>
    </physiologicalReaction>
</comment>
<comment type="activity regulation">
    <text evidence="1">Na(+) is not transported, but it plays an essential structural role and its presence is essential for fluoride channel function.</text>
</comment>
<comment type="subcellular location">
    <subcellularLocation>
        <location evidence="1">Cell inner membrane</location>
        <topology evidence="1">Multi-pass membrane protein</topology>
    </subcellularLocation>
</comment>
<comment type="similarity">
    <text evidence="1">Belongs to the fluoride channel Fluc/FEX (TC 1.A.43) family.</text>
</comment>
<organism>
    <name type="scientific">Campylobacter fetus subsp. fetus (strain 82-40)</name>
    <dbReference type="NCBI Taxonomy" id="360106"/>
    <lineage>
        <taxon>Bacteria</taxon>
        <taxon>Pseudomonadati</taxon>
        <taxon>Campylobacterota</taxon>
        <taxon>Epsilonproteobacteria</taxon>
        <taxon>Campylobacterales</taxon>
        <taxon>Campylobacteraceae</taxon>
        <taxon>Campylobacter</taxon>
    </lineage>
</organism>
<evidence type="ECO:0000255" key="1">
    <source>
        <dbReference type="HAMAP-Rule" id="MF_00454"/>
    </source>
</evidence>
<name>FLUC_CAMFF</name>
<feature type="chain" id="PRO_1000026377" description="Fluoride-specific ion channel FluC">
    <location>
        <begin position="1"/>
        <end position="128"/>
    </location>
</feature>
<feature type="transmembrane region" description="Helical" evidence="1">
    <location>
        <begin position="3"/>
        <end position="23"/>
    </location>
</feature>
<feature type="transmembrane region" description="Helical" evidence="1">
    <location>
        <begin position="34"/>
        <end position="54"/>
    </location>
</feature>
<feature type="transmembrane region" description="Helical" evidence="1">
    <location>
        <begin position="65"/>
        <end position="85"/>
    </location>
</feature>
<feature type="transmembrane region" description="Helical" evidence="1">
    <location>
        <begin position="102"/>
        <end position="122"/>
    </location>
</feature>
<feature type="binding site" evidence="1">
    <location>
        <position position="77"/>
    </location>
    <ligand>
        <name>Na(+)</name>
        <dbReference type="ChEBI" id="CHEBI:29101"/>
        <note>structural</note>
    </ligand>
</feature>
<feature type="binding site" evidence="1">
    <location>
        <position position="80"/>
    </location>
    <ligand>
        <name>Na(+)</name>
        <dbReference type="ChEBI" id="CHEBI:29101"/>
        <note>structural</note>
    </ligand>
</feature>
<sequence length="128" mass="14044">MSFTTIFYIGFGGALGAILRSFTNGFVSKIFPNLSFPLGTLSVNIIGGFFIGFLMSLASNINIDINLKSFLVTGFLGGLTTFSTFSYENMLLLQSGNYTNAFLNIASNLLLSLLFCYFGFWIVKVMYA</sequence>
<accession>A0RPI7</accession>
<gene>
    <name evidence="1" type="primary">fluC</name>
    <name evidence="1" type="synonym">crcB</name>
    <name type="ordered locus">CFF8240_0950</name>
</gene>
<proteinExistence type="inferred from homology"/>
<dbReference type="EMBL" id="CP000487">
    <property type="protein sequence ID" value="ABK82565.1"/>
    <property type="molecule type" value="Genomic_DNA"/>
</dbReference>
<dbReference type="RefSeq" id="WP_002849487.1">
    <property type="nucleotide sequence ID" value="NC_008599.1"/>
</dbReference>
<dbReference type="SMR" id="A0RPI7"/>
<dbReference type="GeneID" id="61064782"/>
<dbReference type="KEGG" id="cff:CFF8240_0950"/>
<dbReference type="eggNOG" id="COG0239">
    <property type="taxonomic scope" value="Bacteria"/>
</dbReference>
<dbReference type="HOGENOM" id="CLU_114342_3_0_7"/>
<dbReference type="Proteomes" id="UP000000760">
    <property type="component" value="Chromosome"/>
</dbReference>
<dbReference type="GO" id="GO:0005886">
    <property type="term" value="C:plasma membrane"/>
    <property type="evidence" value="ECO:0007669"/>
    <property type="project" value="UniProtKB-SubCell"/>
</dbReference>
<dbReference type="GO" id="GO:0062054">
    <property type="term" value="F:fluoride channel activity"/>
    <property type="evidence" value="ECO:0007669"/>
    <property type="project" value="UniProtKB-UniRule"/>
</dbReference>
<dbReference type="GO" id="GO:0046872">
    <property type="term" value="F:metal ion binding"/>
    <property type="evidence" value="ECO:0007669"/>
    <property type="project" value="UniProtKB-KW"/>
</dbReference>
<dbReference type="GO" id="GO:0140114">
    <property type="term" value="P:cellular detoxification of fluoride"/>
    <property type="evidence" value="ECO:0007669"/>
    <property type="project" value="UniProtKB-UniRule"/>
</dbReference>
<dbReference type="HAMAP" id="MF_00454">
    <property type="entry name" value="FluC"/>
    <property type="match status" value="1"/>
</dbReference>
<dbReference type="InterPro" id="IPR003691">
    <property type="entry name" value="FluC"/>
</dbReference>
<dbReference type="NCBIfam" id="TIGR00494">
    <property type="entry name" value="crcB"/>
    <property type="match status" value="1"/>
</dbReference>
<dbReference type="PANTHER" id="PTHR28259">
    <property type="entry name" value="FLUORIDE EXPORT PROTEIN 1-RELATED"/>
    <property type="match status" value="1"/>
</dbReference>
<dbReference type="PANTHER" id="PTHR28259:SF1">
    <property type="entry name" value="FLUORIDE EXPORT PROTEIN 1-RELATED"/>
    <property type="match status" value="1"/>
</dbReference>
<dbReference type="Pfam" id="PF02537">
    <property type="entry name" value="CRCB"/>
    <property type="match status" value="1"/>
</dbReference>